<name>BPPDA_BOTMO</name>
<accession>P0C7S0</accession>
<sequence>QGGWPRPGPEIPP</sequence>
<dbReference type="GO" id="GO:0005576">
    <property type="term" value="C:extracellular region"/>
    <property type="evidence" value="ECO:0007669"/>
    <property type="project" value="UniProtKB-SubCell"/>
</dbReference>
<dbReference type="GO" id="GO:0030414">
    <property type="term" value="F:peptidase inhibitor activity"/>
    <property type="evidence" value="ECO:0007669"/>
    <property type="project" value="UniProtKB-KW"/>
</dbReference>
<dbReference type="GO" id="GO:0090729">
    <property type="term" value="F:toxin activity"/>
    <property type="evidence" value="ECO:0007669"/>
    <property type="project" value="UniProtKB-KW"/>
</dbReference>
<dbReference type="GO" id="GO:0008217">
    <property type="term" value="P:regulation of blood pressure"/>
    <property type="evidence" value="ECO:0007669"/>
    <property type="project" value="UniProtKB-KW"/>
</dbReference>
<keyword id="KW-0903">Direct protein sequencing</keyword>
<keyword id="KW-0382">Hypotensive agent</keyword>
<keyword id="KW-0481">Metalloenzyme inhibitor</keyword>
<keyword id="KW-0483">Metalloprotease inhibitor</keyword>
<keyword id="KW-0646">Protease inhibitor</keyword>
<keyword id="KW-0873">Pyrrolidone carboxylic acid</keyword>
<keyword id="KW-0964">Secreted</keyword>
<keyword id="KW-0800">Toxin</keyword>
<organism>
    <name type="scientific">Bothrops moojeni</name>
    <name type="common">Lance-headed viper</name>
    <name type="synonym">Caissaca</name>
    <dbReference type="NCBI Taxonomy" id="98334"/>
    <lineage>
        <taxon>Eukaryota</taxon>
        <taxon>Metazoa</taxon>
        <taxon>Chordata</taxon>
        <taxon>Craniata</taxon>
        <taxon>Vertebrata</taxon>
        <taxon>Euteleostomi</taxon>
        <taxon>Lepidosauria</taxon>
        <taxon>Squamata</taxon>
        <taxon>Bifurcata</taxon>
        <taxon>Unidentata</taxon>
        <taxon>Episquamata</taxon>
        <taxon>Toxicofera</taxon>
        <taxon>Serpentes</taxon>
        <taxon>Colubroidea</taxon>
        <taxon>Viperidae</taxon>
        <taxon>Crotalinae</taxon>
        <taxon>Bothrops</taxon>
    </lineage>
</organism>
<proteinExistence type="evidence at protein level"/>
<feature type="peptide" id="PRO_0000343184" description="Bradykinin-potentiating peptide 13a" evidence="3">
    <location>
        <begin position="1"/>
        <end position="13"/>
    </location>
</feature>
<feature type="modified residue" description="Pyrrolidone carboxylic acid" evidence="3">
    <location>
        <position position="1"/>
    </location>
</feature>
<evidence type="ECO:0000250" key="1"/>
<evidence type="ECO:0000250" key="2">
    <source>
        <dbReference type="UniProtKB" id="Q6LEM5"/>
    </source>
</evidence>
<evidence type="ECO:0000269" key="3">
    <source>
    </source>
</evidence>
<evidence type="ECO:0000305" key="4"/>
<evidence type="ECO:0000305" key="5">
    <source>
    </source>
</evidence>
<protein>
    <recommendedName>
        <fullName evidence="2">Bradykinin-potentiating peptide 13a</fullName>
        <shortName evidence="2">BPP-13a</shortName>
    </recommendedName>
</protein>
<reference key="1">
    <citation type="journal article" date="2008" name="J. Mass Spectrom.">
        <title>Peptide fingerprinting of snake venoms by direct infusion nano-electrospray ionization mass spectrometry: potential use in venom identification and taxonomy.</title>
        <authorList>
            <person name="Souza G.H.M.F."/>
            <person name="Catharino R.R."/>
            <person name="Ifa D.R."/>
            <person name="Eberlin M.N."/>
            <person name="Hyslop S."/>
        </authorList>
    </citation>
    <scope>PROTEIN SEQUENCE</scope>
    <scope>IDENTIFICATION BY MASS SPECTROMETRY</scope>
    <scope>SUBCELLULAR LOCATION</scope>
    <scope>PYROGLUTAMATE FORMATION AT GLN-1</scope>
    <source>
        <tissue>Venom</tissue>
    </source>
</reference>
<comment type="function">
    <text evidence="1">This peptide both inhibits the activity of the angiotensin-converting enzyme (ACE) and enhances the action of bradykinin by inhibiting the peptidases that inactivate it. It acts as an indirect hypotensive agent (By similarity).</text>
</comment>
<comment type="subcellular location">
    <subcellularLocation>
        <location evidence="3">Secreted</location>
    </subcellularLocation>
</comment>
<comment type="tissue specificity">
    <text evidence="5">Expressed by the venom gland.</text>
</comment>
<comment type="similarity">
    <text evidence="4">Belongs to the bradykinin-potentiating peptide family.</text>
</comment>